<feature type="chain" id="PRO_1000046197" description="Large ribosomal subunit protein uL11">
    <location>
        <begin position="1"/>
        <end position="141"/>
    </location>
</feature>
<protein>
    <recommendedName>
        <fullName evidence="1">Large ribosomal subunit protein uL11</fullName>
    </recommendedName>
    <alternativeName>
        <fullName evidence="2">50S ribosomal protein L11</fullName>
    </alternativeName>
</protein>
<reference key="1">
    <citation type="journal article" date="2006" name="Proc. Natl. Acad. Sci. U.S.A.">
        <title>Comparative genomics of the lactic acid bacteria.</title>
        <authorList>
            <person name="Makarova K.S."/>
            <person name="Slesarev A."/>
            <person name="Wolf Y.I."/>
            <person name="Sorokin A."/>
            <person name="Mirkin B."/>
            <person name="Koonin E.V."/>
            <person name="Pavlov A."/>
            <person name="Pavlova N."/>
            <person name="Karamychev V."/>
            <person name="Polouchine N."/>
            <person name="Shakhova V."/>
            <person name="Grigoriev I."/>
            <person name="Lou Y."/>
            <person name="Rohksar D."/>
            <person name="Lucas S."/>
            <person name="Huang K."/>
            <person name="Goodstein D.M."/>
            <person name="Hawkins T."/>
            <person name="Plengvidhya V."/>
            <person name="Welker D."/>
            <person name="Hughes J."/>
            <person name="Goh Y."/>
            <person name="Benson A."/>
            <person name="Baldwin K."/>
            <person name="Lee J.-H."/>
            <person name="Diaz-Muniz I."/>
            <person name="Dosti B."/>
            <person name="Smeianov V."/>
            <person name="Wechter W."/>
            <person name="Barabote R."/>
            <person name="Lorca G."/>
            <person name="Altermann E."/>
            <person name="Barrangou R."/>
            <person name="Ganesan B."/>
            <person name="Xie Y."/>
            <person name="Rawsthorne H."/>
            <person name="Tamir D."/>
            <person name="Parker C."/>
            <person name="Breidt F."/>
            <person name="Broadbent J.R."/>
            <person name="Hutkins R."/>
            <person name="O'Sullivan D."/>
            <person name="Steele J."/>
            <person name="Unlu G."/>
            <person name="Saier M.H. Jr."/>
            <person name="Klaenhammer T."/>
            <person name="Richardson P."/>
            <person name="Kozyavkin S."/>
            <person name="Weimer B.C."/>
            <person name="Mills D.A."/>
        </authorList>
    </citation>
    <scope>NUCLEOTIDE SEQUENCE [LARGE SCALE GENOMIC DNA]</scope>
    <source>
        <strain>ATCC 334 / BCRC 17002 / CCUG 31169 / CIP 107868 / KCTC 3260 / NRRL B-441</strain>
    </source>
</reference>
<comment type="function">
    <text evidence="1">Forms part of the ribosomal stalk which helps the ribosome interact with GTP-bound translation factors.</text>
</comment>
<comment type="subunit">
    <text evidence="1">Part of the ribosomal stalk of the 50S ribosomal subunit. Interacts with L10 and the large rRNA to form the base of the stalk. L10 forms an elongated spine to which L12 dimers bind in a sequential fashion forming a multimeric L10(L12)X complex.</text>
</comment>
<comment type="PTM">
    <text evidence="1">One or more lysine residues are methylated.</text>
</comment>
<comment type="similarity">
    <text evidence="1">Belongs to the universal ribosomal protein uL11 family.</text>
</comment>
<sequence length="141" mass="14852">MAKKVANIVKLQIPAGKATPAPPVGPALGQAGINIMGFTKDFNARTADQAGMIIPVVITVYEDRSFDFVTKTPPAAVLLKKAAGVEHGSGEPNTKKVAKVTKDQVKEIAETKMQDLNAADVEAAMRMVEGTARSMGFEVEG</sequence>
<name>RL11_LACP3</name>
<dbReference type="EMBL" id="CP000423">
    <property type="protein sequence ID" value="ABJ71024.1"/>
    <property type="molecule type" value="Genomic_DNA"/>
</dbReference>
<dbReference type="RefSeq" id="WP_003567155.1">
    <property type="nucleotide sequence ID" value="NC_008526.1"/>
</dbReference>
<dbReference type="RefSeq" id="YP_807466.1">
    <property type="nucleotide sequence ID" value="NC_008526.1"/>
</dbReference>
<dbReference type="SMR" id="Q035U8"/>
<dbReference type="STRING" id="321967.LSEI_2280"/>
<dbReference type="PaxDb" id="321967-LSEI_2280"/>
<dbReference type="GeneID" id="57090891"/>
<dbReference type="KEGG" id="lca:LSEI_2280"/>
<dbReference type="PATRIC" id="fig|321967.11.peg.2243"/>
<dbReference type="HOGENOM" id="CLU_074237_2_1_9"/>
<dbReference type="Proteomes" id="UP000001651">
    <property type="component" value="Chromosome"/>
</dbReference>
<dbReference type="GO" id="GO:0022625">
    <property type="term" value="C:cytosolic large ribosomal subunit"/>
    <property type="evidence" value="ECO:0007669"/>
    <property type="project" value="TreeGrafter"/>
</dbReference>
<dbReference type="GO" id="GO:0070180">
    <property type="term" value="F:large ribosomal subunit rRNA binding"/>
    <property type="evidence" value="ECO:0007669"/>
    <property type="project" value="UniProtKB-UniRule"/>
</dbReference>
<dbReference type="GO" id="GO:0003735">
    <property type="term" value="F:structural constituent of ribosome"/>
    <property type="evidence" value="ECO:0007669"/>
    <property type="project" value="InterPro"/>
</dbReference>
<dbReference type="GO" id="GO:0006412">
    <property type="term" value="P:translation"/>
    <property type="evidence" value="ECO:0007669"/>
    <property type="project" value="UniProtKB-UniRule"/>
</dbReference>
<dbReference type="CDD" id="cd00349">
    <property type="entry name" value="Ribosomal_L11"/>
    <property type="match status" value="1"/>
</dbReference>
<dbReference type="FunFam" id="1.10.10.250:FF:000001">
    <property type="entry name" value="50S ribosomal protein L11"/>
    <property type="match status" value="1"/>
</dbReference>
<dbReference type="FunFam" id="3.30.1550.10:FF:000001">
    <property type="entry name" value="50S ribosomal protein L11"/>
    <property type="match status" value="1"/>
</dbReference>
<dbReference type="Gene3D" id="1.10.10.250">
    <property type="entry name" value="Ribosomal protein L11, C-terminal domain"/>
    <property type="match status" value="1"/>
</dbReference>
<dbReference type="Gene3D" id="3.30.1550.10">
    <property type="entry name" value="Ribosomal protein L11/L12, N-terminal domain"/>
    <property type="match status" value="1"/>
</dbReference>
<dbReference type="HAMAP" id="MF_00736">
    <property type="entry name" value="Ribosomal_uL11"/>
    <property type="match status" value="1"/>
</dbReference>
<dbReference type="InterPro" id="IPR000911">
    <property type="entry name" value="Ribosomal_uL11"/>
</dbReference>
<dbReference type="InterPro" id="IPR006519">
    <property type="entry name" value="Ribosomal_uL11_bac-typ"/>
</dbReference>
<dbReference type="InterPro" id="IPR020783">
    <property type="entry name" value="Ribosomal_uL11_C"/>
</dbReference>
<dbReference type="InterPro" id="IPR036769">
    <property type="entry name" value="Ribosomal_uL11_C_sf"/>
</dbReference>
<dbReference type="InterPro" id="IPR020785">
    <property type="entry name" value="Ribosomal_uL11_CS"/>
</dbReference>
<dbReference type="InterPro" id="IPR020784">
    <property type="entry name" value="Ribosomal_uL11_N"/>
</dbReference>
<dbReference type="InterPro" id="IPR036796">
    <property type="entry name" value="Ribosomal_uL11_N_sf"/>
</dbReference>
<dbReference type="NCBIfam" id="TIGR01632">
    <property type="entry name" value="L11_bact"/>
    <property type="match status" value="1"/>
</dbReference>
<dbReference type="PANTHER" id="PTHR11661">
    <property type="entry name" value="60S RIBOSOMAL PROTEIN L12"/>
    <property type="match status" value="1"/>
</dbReference>
<dbReference type="PANTHER" id="PTHR11661:SF1">
    <property type="entry name" value="LARGE RIBOSOMAL SUBUNIT PROTEIN UL11M"/>
    <property type="match status" value="1"/>
</dbReference>
<dbReference type="Pfam" id="PF00298">
    <property type="entry name" value="Ribosomal_L11"/>
    <property type="match status" value="1"/>
</dbReference>
<dbReference type="Pfam" id="PF03946">
    <property type="entry name" value="Ribosomal_L11_N"/>
    <property type="match status" value="1"/>
</dbReference>
<dbReference type="SMART" id="SM00649">
    <property type="entry name" value="RL11"/>
    <property type="match status" value="1"/>
</dbReference>
<dbReference type="SUPFAM" id="SSF54747">
    <property type="entry name" value="Ribosomal L11/L12e N-terminal domain"/>
    <property type="match status" value="1"/>
</dbReference>
<dbReference type="SUPFAM" id="SSF46906">
    <property type="entry name" value="Ribosomal protein L11, C-terminal domain"/>
    <property type="match status" value="1"/>
</dbReference>
<dbReference type="PROSITE" id="PS00359">
    <property type="entry name" value="RIBOSOMAL_L11"/>
    <property type="match status" value="1"/>
</dbReference>
<keyword id="KW-0488">Methylation</keyword>
<keyword id="KW-1185">Reference proteome</keyword>
<keyword id="KW-0687">Ribonucleoprotein</keyword>
<keyword id="KW-0689">Ribosomal protein</keyword>
<keyword id="KW-0694">RNA-binding</keyword>
<keyword id="KW-0699">rRNA-binding</keyword>
<accession>Q035U8</accession>
<proteinExistence type="inferred from homology"/>
<gene>
    <name evidence="1" type="primary">rplK</name>
    <name type="ordered locus">LSEI_2280</name>
</gene>
<evidence type="ECO:0000255" key="1">
    <source>
        <dbReference type="HAMAP-Rule" id="MF_00736"/>
    </source>
</evidence>
<evidence type="ECO:0000305" key="2"/>
<organism>
    <name type="scientific">Lacticaseibacillus paracasei (strain ATCC 334 / BCRC 17002 / CCUG 31169 / CIP 107868 / KCTC 3260 / NRRL B-441)</name>
    <name type="common">Lactobacillus paracasei</name>
    <dbReference type="NCBI Taxonomy" id="321967"/>
    <lineage>
        <taxon>Bacteria</taxon>
        <taxon>Bacillati</taxon>
        <taxon>Bacillota</taxon>
        <taxon>Bacilli</taxon>
        <taxon>Lactobacillales</taxon>
        <taxon>Lactobacillaceae</taxon>
        <taxon>Lacticaseibacillus</taxon>
    </lineage>
</organism>